<sequence>MILIDTSAWVEYFRATGSIAAVEVRRLLSEEAARIAMCEPIAMEILSGALDDNTHTTLERLVNGLPSLNVDDAIDFRAAAGIYRAARRAGETVRSINDCLIAALAIRHGARIVHRDADFDVIARITNLQAASFR</sequence>
<gene>
    <name evidence="2" type="primary">vapC11</name>
    <name type="ordered locus">MT1612</name>
</gene>
<name>VPC11_MYCTO</name>
<evidence type="ECO:0000250" key="1"/>
<evidence type="ECO:0000255" key="2">
    <source>
        <dbReference type="HAMAP-Rule" id="MF_00265"/>
    </source>
</evidence>
<comment type="function">
    <text evidence="1">Toxic component of a type II toxin-antitoxin (TA) system. Acts as an RNase. Its toxic effects on cell growth and colony formation are neutralized by coexpression with cognate antitoxin VapB11 (By similarity).</text>
</comment>
<comment type="cofactor">
    <cofactor evidence="2">
        <name>Mg(2+)</name>
        <dbReference type="ChEBI" id="CHEBI:18420"/>
    </cofactor>
</comment>
<comment type="similarity">
    <text evidence="2">Belongs to the PINc/VapC protein family.</text>
</comment>
<dbReference type="EC" id="3.1.-.-" evidence="2"/>
<dbReference type="EMBL" id="AE000516">
    <property type="protein sequence ID" value="AAK45879.1"/>
    <property type="molecule type" value="Genomic_DNA"/>
</dbReference>
<dbReference type="PIR" id="F70763">
    <property type="entry name" value="F70763"/>
</dbReference>
<dbReference type="RefSeq" id="WP_003407786.1">
    <property type="nucleotide sequence ID" value="NZ_KK341227.1"/>
</dbReference>
<dbReference type="SMR" id="P9WFA4"/>
<dbReference type="KEGG" id="mtc:MT1612"/>
<dbReference type="PATRIC" id="fig|83331.31.peg.1734"/>
<dbReference type="HOGENOM" id="CLU_118482_1_1_11"/>
<dbReference type="Proteomes" id="UP000001020">
    <property type="component" value="Chromosome"/>
</dbReference>
<dbReference type="GO" id="GO:0000287">
    <property type="term" value="F:magnesium ion binding"/>
    <property type="evidence" value="ECO:0007669"/>
    <property type="project" value="UniProtKB-UniRule"/>
</dbReference>
<dbReference type="GO" id="GO:0004540">
    <property type="term" value="F:RNA nuclease activity"/>
    <property type="evidence" value="ECO:0007669"/>
    <property type="project" value="InterPro"/>
</dbReference>
<dbReference type="CDD" id="cd18756">
    <property type="entry name" value="PIN_MtVapC15-VapC11-like"/>
    <property type="match status" value="1"/>
</dbReference>
<dbReference type="Gene3D" id="3.40.50.1010">
    <property type="entry name" value="5'-nuclease"/>
    <property type="match status" value="1"/>
</dbReference>
<dbReference type="HAMAP" id="MF_00265">
    <property type="entry name" value="VapC_Nob1"/>
    <property type="match status" value="1"/>
</dbReference>
<dbReference type="InterPro" id="IPR029060">
    <property type="entry name" value="PIN-like_dom_sf"/>
</dbReference>
<dbReference type="InterPro" id="IPR002716">
    <property type="entry name" value="PIN_dom"/>
</dbReference>
<dbReference type="InterPro" id="IPR051749">
    <property type="entry name" value="PINc/VapC_TA_RNase"/>
</dbReference>
<dbReference type="InterPro" id="IPR022907">
    <property type="entry name" value="VapC_family"/>
</dbReference>
<dbReference type="PANTHER" id="PTHR42740">
    <property type="entry name" value="RIBONUCLEASE VAPC3"/>
    <property type="match status" value="1"/>
</dbReference>
<dbReference type="PANTHER" id="PTHR42740:SF1">
    <property type="entry name" value="RIBONUCLEASE VAPC3"/>
    <property type="match status" value="1"/>
</dbReference>
<dbReference type="Pfam" id="PF01850">
    <property type="entry name" value="PIN"/>
    <property type="match status" value="1"/>
</dbReference>
<dbReference type="SUPFAM" id="SSF88723">
    <property type="entry name" value="PIN domain-like"/>
    <property type="match status" value="1"/>
</dbReference>
<organism>
    <name type="scientific">Mycobacterium tuberculosis (strain CDC 1551 / Oshkosh)</name>
    <dbReference type="NCBI Taxonomy" id="83331"/>
    <lineage>
        <taxon>Bacteria</taxon>
        <taxon>Bacillati</taxon>
        <taxon>Actinomycetota</taxon>
        <taxon>Actinomycetes</taxon>
        <taxon>Mycobacteriales</taxon>
        <taxon>Mycobacteriaceae</taxon>
        <taxon>Mycobacterium</taxon>
        <taxon>Mycobacterium tuberculosis complex</taxon>
    </lineage>
</organism>
<protein>
    <recommendedName>
        <fullName evidence="2">Ribonuclease VapC11</fullName>
        <shortName evidence="2">RNase VapC11</shortName>
        <ecNumber evidence="2">3.1.-.-</ecNumber>
    </recommendedName>
    <alternativeName>
        <fullName evidence="2">Toxin VapC11</fullName>
    </alternativeName>
</protein>
<keyword id="KW-0378">Hydrolase</keyword>
<keyword id="KW-0460">Magnesium</keyword>
<keyword id="KW-0479">Metal-binding</keyword>
<keyword id="KW-0540">Nuclease</keyword>
<keyword id="KW-1185">Reference proteome</keyword>
<keyword id="KW-1277">Toxin-antitoxin system</keyword>
<feature type="chain" id="PRO_0000428573" description="Ribonuclease VapC11">
    <location>
        <begin position="1"/>
        <end position="134"/>
    </location>
</feature>
<feature type="domain" description="PINc" evidence="2">
    <location>
        <begin position="2"/>
        <end position="126"/>
    </location>
</feature>
<feature type="binding site" evidence="2">
    <location>
        <position position="5"/>
    </location>
    <ligand>
        <name>Mg(2+)</name>
        <dbReference type="ChEBI" id="CHEBI:18420"/>
    </ligand>
</feature>
<feature type="binding site" evidence="2">
    <location>
        <position position="98"/>
    </location>
    <ligand>
        <name>Mg(2+)</name>
        <dbReference type="ChEBI" id="CHEBI:18420"/>
    </ligand>
</feature>
<reference key="1">
    <citation type="journal article" date="2002" name="J. Bacteriol.">
        <title>Whole-genome comparison of Mycobacterium tuberculosis clinical and laboratory strains.</title>
        <authorList>
            <person name="Fleischmann R.D."/>
            <person name="Alland D."/>
            <person name="Eisen J.A."/>
            <person name="Carpenter L."/>
            <person name="White O."/>
            <person name="Peterson J.D."/>
            <person name="DeBoy R.T."/>
            <person name="Dodson R.J."/>
            <person name="Gwinn M.L."/>
            <person name="Haft D.H."/>
            <person name="Hickey E.K."/>
            <person name="Kolonay J.F."/>
            <person name="Nelson W.C."/>
            <person name="Umayam L.A."/>
            <person name="Ermolaeva M.D."/>
            <person name="Salzberg S.L."/>
            <person name="Delcher A."/>
            <person name="Utterback T.R."/>
            <person name="Weidman J.F."/>
            <person name="Khouri H.M."/>
            <person name="Gill J."/>
            <person name="Mikula A."/>
            <person name="Bishai W."/>
            <person name="Jacobs W.R. Jr."/>
            <person name="Venter J.C."/>
            <person name="Fraser C.M."/>
        </authorList>
    </citation>
    <scope>NUCLEOTIDE SEQUENCE [LARGE SCALE GENOMIC DNA]</scope>
    <source>
        <strain>CDC 1551 / Oshkosh</strain>
    </source>
</reference>
<proteinExistence type="inferred from homology"/>
<accession>P9WFA4</accession>
<accession>L0T8M0</accession>
<accession>P64879</accession>
<accession>Q10770</accession>